<comment type="function">
    <text evidence="2">Component of the ubiquinol-cytochrome c reductase complex (complex III or cytochrome b-c1 complex) that is part of the mitochondrial respiratory chain. The b-c1 complex mediates electron transfer from ubiquinol to cytochrome c. Contributes to the generation of a proton gradient across the mitochondrial membrane that is then used for ATP synthesis.</text>
</comment>
<comment type="cofactor">
    <cofactor evidence="2">
        <name>heme b</name>
        <dbReference type="ChEBI" id="CHEBI:60344"/>
    </cofactor>
    <text evidence="2">Binds 2 heme b groups non-covalently.</text>
</comment>
<comment type="subunit">
    <text evidence="2">The cytochrome bc1 complex contains 11 subunits: 3 respiratory subunits (MT-CYB, CYC1 and UQCRFS1), 2 core proteins (UQCRC1 and UQCRC2) and 6 low-molecular weight proteins (UQCRH/QCR6, UQCRB/QCR7, UQCRQ/QCR8, UQCR10/QCR9, UQCR11/QCR10 and a cleavage product of UQCRFS1). This cytochrome bc1 complex then forms a dimer.</text>
</comment>
<comment type="subcellular location">
    <subcellularLocation>
        <location evidence="2">Mitochondrion inner membrane</location>
        <topology evidence="2">Multi-pass membrane protein</topology>
    </subcellularLocation>
</comment>
<comment type="miscellaneous">
    <text evidence="1">Heme 1 (or BL or b562) is low-potential and absorbs at about 562 nm, and heme 2 (or BH or b566) is high-potential and absorbs at about 566 nm.</text>
</comment>
<comment type="similarity">
    <text evidence="3 4">Belongs to the cytochrome b family.</text>
</comment>
<comment type="caution">
    <text evidence="2">The full-length protein contains only eight transmembrane helices, not nine as predicted by bioinformatics tools.</text>
</comment>
<evidence type="ECO:0000250" key="1"/>
<evidence type="ECO:0000250" key="2">
    <source>
        <dbReference type="UniProtKB" id="P00157"/>
    </source>
</evidence>
<evidence type="ECO:0000255" key="3">
    <source>
        <dbReference type="PROSITE-ProRule" id="PRU00967"/>
    </source>
</evidence>
<evidence type="ECO:0000255" key="4">
    <source>
        <dbReference type="PROSITE-ProRule" id="PRU00968"/>
    </source>
</evidence>
<proteinExistence type="inferred from homology"/>
<dbReference type="EMBL" id="AF036274">
    <property type="protein sequence ID" value="AAD51425.1"/>
    <property type="molecule type" value="Genomic_DNA"/>
</dbReference>
<dbReference type="RefSeq" id="YP_007627211.1">
    <property type="nucleotide sequence ID" value="NC_020788.1"/>
</dbReference>
<dbReference type="SMR" id="Q9T9C0"/>
<dbReference type="GeneID" id="15088449"/>
<dbReference type="CTD" id="4519"/>
<dbReference type="GO" id="GO:0005743">
    <property type="term" value="C:mitochondrial inner membrane"/>
    <property type="evidence" value="ECO:0007669"/>
    <property type="project" value="UniProtKB-SubCell"/>
</dbReference>
<dbReference type="GO" id="GO:0045275">
    <property type="term" value="C:respiratory chain complex III"/>
    <property type="evidence" value="ECO:0007669"/>
    <property type="project" value="InterPro"/>
</dbReference>
<dbReference type="GO" id="GO:0046872">
    <property type="term" value="F:metal ion binding"/>
    <property type="evidence" value="ECO:0007669"/>
    <property type="project" value="UniProtKB-KW"/>
</dbReference>
<dbReference type="GO" id="GO:0008121">
    <property type="term" value="F:ubiquinol-cytochrome-c reductase activity"/>
    <property type="evidence" value="ECO:0007669"/>
    <property type="project" value="InterPro"/>
</dbReference>
<dbReference type="GO" id="GO:0006122">
    <property type="term" value="P:mitochondrial electron transport, ubiquinol to cytochrome c"/>
    <property type="evidence" value="ECO:0007669"/>
    <property type="project" value="TreeGrafter"/>
</dbReference>
<dbReference type="CDD" id="cd00290">
    <property type="entry name" value="cytochrome_b_C"/>
    <property type="match status" value="1"/>
</dbReference>
<dbReference type="CDD" id="cd00284">
    <property type="entry name" value="Cytochrome_b_N"/>
    <property type="match status" value="1"/>
</dbReference>
<dbReference type="FunFam" id="1.20.810.10:FF:000002">
    <property type="entry name" value="Cytochrome b"/>
    <property type="match status" value="1"/>
</dbReference>
<dbReference type="Gene3D" id="1.20.810.10">
    <property type="entry name" value="Cytochrome Bc1 Complex, Chain C"/>
    <property type="match status" value="1"/>
</dbReference>
<dbReference type="InterPro" id="IPR005798">
    <property type="entry name" value="Cyt_b/b6_C"/>
</dbReference>
<dbReference type="InterPro" id="IPR036150">
    <property type="entry name" value="Cyt_b/b6_C_sf"/>
</dbReference>
<dbReference type="InterPro" id="IPR005797">
    <property type="entry name" value="Cyt_b/b6_N"/>
</dbReference>
<dbReference type="InterPro" id="IPR027387">
    <property type="entry name" value="Cytb/b6-like_sf"/>
</dbReference>
<dbReference type="InterPro" id="IPR030689">
    <property type="entry name" value="Cytochrome_b"/>
</dbReference>
<dbReference type="InterPro" id="IPR048260">
    <property type="entry name" value="Cytochrome_b_C_euk/bac"/>
</dbReference>
<dbReference type="InterPro" id="IPR048259">
    <property type="entry name" value="Cytochrome_b_N_euk/bac"/>
</dbReference>
<dbReference type="InterPro" id="IPR016174">
    <property type="entry name" value="Di-haem_cyt_TM"/>
</dbReference>
<dbReference type="PANTHER" id="PTHR19271">
    <property type="entry name" value="CYTOCHROME B"/>
    <property type="match status" value="1"/>
</dbReference>
<dbReference type="PANTHER" id="PTHR19271:SF16">
    <property type="entry name" value="CYTOCHROME B"/>
    <property type="match status" value="1"/>
</dbReference>
<dbReference type="Pfam" id="PF00032">
    <property type="entry name" value="Cytochrom_B_C"/>
    <property type="match status" value="1"/>
</dbReference>
<dbReference type="Pfam" id="PF00033">
    <property type="entry name" value="Cytochrome_B"/>
    <property type="match status" value="1"/>
</dbReference>
<dbReference type="PIRSF" id="PIRSF038885">
    <property type="entry name" value="COB"/>
    <property type="match status" value="1"/>
</dbReference>
<dbReference type="SUPFAM" id="SSF81648">
    <property type="entry name" value="a domain/subunit of cytochrome bc1 complex (Ubiquinol-cytochrome c reductase)"/>
    <property type="match status" value="1"/>
</dbReference>
<dbReference type="SUPFAM" id="SSF81342">
    <property type="entry name" value="Transmembrane di-heme cytochromes"/>
    <property type="match status" value="1"/>
</dbReference>
<dbReference type="PROSITE" id="PS51003">
    <property type="entry name" value="CYTB_CTER"/>
    <property type="match status" value="1"/>
</dbReference>
<dbReference type="PROSITE" id="PS51002">
    <property type="entry name" value="CYTB_NTER"/>
    <property type="match status" value="1"/>
</dbReference>
<sequence length="379" mass="42832">MTNIRKSHPLMKIVNNAFIDLPAPSNISSWWNFGSLLGICLILQILTGLFLAMHYTSDTTTAFASVTHICRDVNYGWIIRYMHANGASMFFICLYMHVGRGLYYGSYTFLETWNIGVILLFTVMATAFMGYVLPWGQMSFWGATVITNLLSAIPYIGTNLVEWIWGGFSVDKATLTRFFAFHFILPFIIAALAMIHLLFLHETGSNNPTGISSDMDKIPFHPYYTIKDILGALLLILALMMLVLFAPDLLGDPDNYTPANPLNTPPHIKPEWYFLFAYAILRSIPNKLGGVLALVLSILILILMPLLHTSKQRSMMFRPLSQCLFWILVANLLTLTWIGGQPVEHPYIIIGQLASIMYFFLILVLMPTASMIENNLLKW</sequence>
<name>CYB_TETQU</name>
<reference key="1">
    <citation type="journal article" date="1999" name="Mol. Phylogenet. Evol.">
        <title>The tribal radiation of the family Bovidae (Artiodactyla) and the evolution of the mitochondrial cytochrome b gene.</title>
        <authorList>
            <person name="Hassanin A."/>
            <person name="Douzery E.J.P."/>
        </authorList>
    </citation>
    <scope>NUCLEOTIDE SEQUENCE [GENOMIC DNA]</scope>
</reference>
<gene>
    <name type="primary">MT-CYB</name>
    <name type="synonym">COB</name>
    <name type="synonym">CYTB</name>
    <name type="synonym">MTCYB</name>
</gene>
<organism>
    <name type="scientific">Tetracerus quadricornis</name>
    <name type="common">Four-horned antelope</name>
    <name type="synonym">Chousingha</name>
    <dbReference type="NCBI Taxonomy" id="73823"/>
    <lineage>
        <taxon>Eukaryota</taxon>
        <taxon>Metazoa</taxon>
        <taxon>Chordata</taxon>
        <taxon>Craniata</taxon>
        <taxon>Vertebrata</taxon>
        <taxon>Euteleostomi</taxon>
        <taxon>Mammalia</taxon>
        <taxon>Eutheria</taxon>
        <taxon>Laurasiatheria</taxon>
        <taxon>Artiodactyla</taxon>
        <taxon>Ruminantia</taxon>
        <taxon>Pecora</taxon>
        <taxon>Bovidae</taxon>
        <taxon>Bovinae</taxon>
        <taxon>Tetracerus</taxon>
    </lineage>
</organism>
<protein>
    <recommendedName>
        <fullName>Cytochrome b</fullName>
    </recommendedName>
    <alternativeName>
        <fullName>Complex III subunit 3</fullName>
    </alternativeName>
    <alternativeName>
        <fullName>Complex III subunit III</fullName>
    </alternativeName>
    <alternativeName>
        <fullName>Cytochrome b-c1 complex subunit 3</fullName>
    </alternativeName>
    <alternativeName>
        <fullName>Ubiquinol-cytochrome-c reductase complex cytochrome b subunit</fullName>
    </alternativeName>
</protein>
<accession>Q9T9C0</accession>
<keyword id="KW-0249">Electron transport</keyword>
<keyword id="KW-0349">Heme</keyword>
<keyword id="KW-0408">Iron</keyword>
<keyword id="KW-0472">Membrane</keyword>
<keyword id="KW-0479">Metal-binding</keyword>
<keyword id="KW-0496">Mitochondrion</keyword>
<keyword id="KW-0999">Mitochondrion inner membrane</keyword>
<keyword id="KW-0679">Respiratory chain</keyword>
<keyword id="KW-0812">Transmembrane</keyword>
<keyword id="KW-1133">Transmembrane helix</keyword>
<keyword id="KW-0813">Transport</keyword>
<keyword id="KW-0830">Ubiquinone</keyword>
<geneLocation type="mitochondrion"/>
<feature type="chain" id="PRO_0000254769" description="Cytochrome b">
    <location>
        <begin position="1"/>
        <end position="379"/>
    </location>
</feature>
<feature type="transmembrane region" description="Helical" evidence="2">
    <location>
        <begin position="33"/>
        <end position="53"/>
    </location>
</feature>
<feature type="transmembrane region" description="Helical" evidence="2">
    <location>
        <begin position="77"/>
        <end position="98"/>
    </location>
</feature>
<feature type="transmembrane region" description="Helical" evidence="2">
    <location>
        <begin position="113"/>
        <end position="133"/>
    </location>
</feature>
<feature type="transmembrane region" description="Helical" evidence="2">
    <location>
        <begin position="178"/>
        <end position="198"/>
    </location>
</feature>
<feature type="transmembrane region" description="Helical" evidence="2">
    <location>
        <begin position="226"/>
        <end position="246"/>
    </location>
</feature>
<feature type="transmembrane region" description="Helical" evidence="2">
    <location>
        <begin position="288"/>
        <end position="308"/>
    </location>
</feature>
<feature type="transmembrane region" description="Helical" evidence="2">
    <location>
        <begin position="320"/>
        <end position="340"/>
    </location>
</feature>
<feature type="transmembrane region" description="Helical" evidence="2">
    <location>
        <begin position="347"/>
        <end position="367"/>
    </location>
</feature>
<feature type="binding site" description="axial binding residue" evidence="2">
    <location>
        <position position="83"/>
    </location>
    <ligand>
        <name>heme b</name>
        <dbReference type="ChEBI" id="CHEBI:60344"/>
        <label>b562</label>
    </ligand>
    <ligandPart>
        <name>Fe</name>
        <dbReference type="ChEBI" id="CHEBI:18248"/>
    </ligandPart>
</feature>
<feature type="binding site" description="axial binding residue" evidence="2">
    <location>
        <position position="97"/>
    </location>
    <ligand>
        <name>heme b</name>
        <dbReference type="ChEBI" id="CHEBI:60344"/>
        <label>b566</label>
    </ligand>
    <ligandPart>
        <name>Fe</name>
        <dbReference type="ChEBI" id="CHEBI:18248"/>
    </ligandPart>
</feature>
<feature type="binding site" description="axial binding residue" evidence="2">
    <location>
        <position position="182"/>
    </location>
    <ligand>
        <name>heme b</name>
        <dbReference type="ChEBI" id="CHEBI:60344"/>
        <label>b562</label>
    </ligand>
    <ligandPart>
        <name>Fe</name>
        <dbReference type="ChEBI" id="CHEBI:18248"/>
    </ligandPart>
</feature>
<feature type="binding site" description="axial binding residue" evidence="2">
    <location>
        <position position="196"/>
    </location>
    <ligand>
        <name>heme b</name>
        <dbReference type="ChEBI" id="CHEBI:60344"/>
        <label>b566</label>
    </ligand>
    <ligandPart>
        <name>Fe</name>
        <dbReference type="ChEBI" id="CHEBI:18248"/>
    </ligandPart>
</feature>
<feature type="binding site" evidence="2">
    <location>
        <position position="201"/>
    </location>
    <ligand>
        <name>a ubiquinone</name>
        <dbReference type="ChEBI" id="CHEBI:16389"/>
    </ligand>
</feature>